<evidence type="ECO:0000255" key="1">
    <source>
        <dbReference type="HAMAP-Rule" id="MF_01818"/>
    </source>
</evidence>
<name>RNZ_LACLA</name>
<gene>
    <name evidence="1" type="primary">rnz</name>
    <name type="ordered locus">LL0630</name>
    <name type="ORF">L18686</name>
</gene>
<sequence length="307" mass="34035">MEIQFLGTGAGQPSKSRNTQAIALKMLDERNEIWLFDCGEATQHQILNTTIKPRKITKIFITHLHGDHIFGLPGFLSSRSFQSSDEQTDLELYGPVGIKDFVLTALRISGSRLAYRINFHEIDSAGKIFEDDSFEVHTDLLDHTIFCLGYRVVEKNRIGELDANALKEAGLPFGPLFGKIKKGEIVQYEGKTFDPKDYIGADKAGKIVTILGDTRKSNVAVRLAYGADLLVHEATYEANESKMAKAHGHSTTKQAADVAKEAGVNRLLLTHISARYVGPLVGQLVREAQTVHSNTFVVKDFYEEKIG</sequence>
<comment type="function">
    <text evidence="1">Zinc phosphodiesterase, which displays some tRNA 3'-processing endonuclease activity. Probably involved in tRNA maturation, by removing a 3'-trailer from precursor tRNA.</text>
</comment>
<comment type="catalytic activity">
    <reaction evidence="1">
        <text>Endonucleolytic cleavage of RNA, removing extra 3' nucleotides from tRNA precursor, generating 3' termini of tRNAs. A 3'-hydroxy group is left at the tRNA terminus and a 5'-phosphoryl group is left at the trailer molecule.</text>
        <dbReference type="EC" id="3.1.26.11"/>
    </reaction>
</comment>
<comment type="cofactor">
    <cofactor evidence="1">
        <name>Zn(2+)</name>
        <dbReference type="ChEBI" id="CHEBI:29105"/>
    </cofactor>
    <text evidence="1">Binds 2 Zn(2+) ions.</text>
</comment>
<comment type="subunit">
    <text evidence="1">Homodimer.</text>
</comment>
<comment type="similarity">
    <text evidence="1">Belongs to the RNase Z family.</text>
</comment>
<dbReference type="EC" id="3.1.26.11" evidence="1"/>
<dbReference type="EMBL" id="AE005176">
    <property type="protein sequence ID" value="AAK04728.1"/>
    <property type="molecule type" value="Genomic_DNA"/>
</dbReference>
<dbReference type="PIR" id="F86703">
    <property type="entry name" value="F86703"/>
</dbReference>
<dbReference type="RefSeq" id="NP_266786.1">
    <property type="nucleotide sequence ID" value="NC_002662.1"/>
</dbReference>
<dbReference type="RefSeq" id="WP_003129545.1">
    <property type="nucleotide sequence ID" value="NC_002662.1"/>
</dbReference>
<dbReference type="SMR" id="Q9CHT8"/>
<dbReference type="PaxDb" id="272623-L18686"/>
<dbReference type="EnsemblBacteria" id="AAK04728">
    <property type="protein sequence ID" value="AAK04728"/>
    <property type="gene ID" value="L18686"/>
</dbReference>
<dbReference type="GeneID" id="89632748"/>
<dbReference type="KEGG" id="lla:L18686"/>
<dbReference type="PATRIC" id="fig|272623.7.peg.674"/>
<dbReference type="eggNOG" id="COG1234">
    <property type="taxonomic scope" value="Bacteria"/>
</dbReference>
<dbReference type="HOGENOM" id="CLU_031317_2_0_9"/>
<dbReference type="OrthoDB" id="9800940at2"/>
<dbReference type="Proteomes" id="UP000002196">
    <property type="component" value="Chromosome"/>
</dbReference>
<dbReference type="GO" id="GO:0042781">
    <property type="term" value="F:3'-tRNA processing endoribonuclease activity"/>
    <property type="evidence" value="ECO:0007669"/>
    <property type="project" value="UniProtKB-UniRule"/>
</dbReference>
<dbReference type="GO" id="GO:0008270">
    <property type="term" value="F:zinc ion binding"/>
    <property type="evidence" value="ECO:0007669"/>
    <property type="project" value="UniProtKB-UniRule"/>
</dbReference>
<dbReference type="CDD" id="cd07717">
    <property type="entry name" value="RNaseZ_ZiPD-like_MBL-fold"/>
    <property type="match status" value="1"/>
</dbReference>
<dbReference type="FunFam" id="3.60.15.10:FF:000002">
    <property type="entry name" value="Ribonuclease Z"/>
    <property type="match status" value="1"/>
</dbReference>
<dbReference type="Gene3D" id="3.60.15.10">
    <property type="entry name" value="Ribonuclease Z/Hydroxyacylglutathione hydrolase-like"/>
    <property type="match status" value="1"/>
</dbReference>
<dbReference type="HAMAP" id="MF_01818">
    <property type="entry name" value="RNase_Z_BN"/>
    <property type="match status" value="1"/>
</dbReference>
<dbReference type="InterPro" id="IPR001279">
    <property type="entry name" value="Metallo-B-lactamas"/>
</dbReference>
<dbReference type="InterPro" id="IPR036866">
    <property type="entry name" value="RibonucZ/Hydroxyglut_hydro"/>
</dbReference>
<dbReference type="InterPro" id="IPR013471">
    <property type="entry name" value="RNase_Z/BN"/>
</dbReference>
<dbReference type="NCBIfam" id="NF000801">
    <property type="entry name" value="PRK00055.1-3"/>
    <property type="match status" value="1"/>
</dbReference>
<dbReference type="NCBIfam" id="TIGR02651">
    <property type="entry name" value="RNase_Z"/>
    <property type="match status" value="1"/>
</dbReference>
<dbReference type="PANTHER" id="PTHR46018">
    <property type="entry name" value="ZINC PHOSPHODIESTERASE ELAC PROTEIN 1"/>
    <property type="match status" value="1"/>
</dbReference>
<dbReference type="PANTHER" id="PTHR46018:SF2">
    <property type="entry name" value="ZINC PHOSPHODIESTERASE ELAC PROTEIN 1"/>
    <property type="match status" value="1"/>
</dbReference>
<dbReference type="Pfam" id="PF00753">
    <property type="entry name" value="Lactamase_B"/>
    <property type="match status" value="1"/>
</dbReference>
<dbReference type="Pfam" id="PF12706">
    <property type="entry name" value="Lactamase_B_2"/>
    <property type="match status" value="1"/>
</dbReference>
<dbReference type="SUPFAM" id="SSF56281">
    <property type="entry name" value="Metallo-hydrolase/oxidoreductase"/>
    <property type="match status" value="1"/>
</dbReference>
<accession>Q9CHT8</accession>
<protein>
    <recommendedName>
        <fullName evidence="1">Ribonuclease Z</fullName>
        <shortName evidence="1">RNase Z</shortName>
        <ecNumber evidence="1">3.1.26.11</ecNumber>
    </recommendedName>
    <alternativeName>
        <fullName evidence="1">tRNA 3 endonuclease</fullName>
    </alternativeName>
    <alternativeName>
        <fullName evidence="1">tRNase Z</fullName>
    </alternativeName>
</protein>
<reference key="1">
    <citation type="journal article" date="2001" name="Genome Res.">
        <title>The complete genome sequence of the lactic acid bacterium Lactococcus lactis ssp. lactis IL1403.</title>
        <authorList>
            <person name="Bolotin A."/>
            <person name="Wincker P."/>
            <person name="Mauger S."/>
            <person name="Jaillon O."/>
            <person name="Malarme K."/>
            <person name="Weissenbach J."/>
            <person name="Ehrlich S.D."/>
            <person name="Sorokin A."/>
        </authorList>
    </citation>
    <scope>NUCLEOTIDE SEQUENCE [LARGE SCALE GENOMIC DNA]</scope>
    <source>
        <strain>IL1403</strain>
    </source>
</reference>
<keyword id="KW-0255">Endonuclease</keyword>
<keyword id="KW-0378">Hydrolase</keyword>
<keyword id="KW-0479">Metal-binding</keyword>
<keyword id="KW-0540">Nuclease</keyword>
<keyword id="KW-1185">Reference proteome</keyword>
<keyword id="KW-0819">tRNA processing</keyword>
<keyword id="KW-0862">Zinc</keyword>
<feature type="chain" id="PRO_0000155871" description="Ribonuclease Z">
    <location>
        <begin position="1"/>
        <end position="307"/>
    </location>
</feature>
<feature type="active site" description="Proton acceptor" evidence="1">
    <location>
        <position position="67"/>
    </location>
</feature>
<feature type="binding site" evidence="1">
    <location>
        <position position="63"/>
    </location>
    <ligand>
        <name>Zn(2+)</name>
        <dbReference type="ChEBI" id="CHEBI:29105"/>
        <label>1</label>
        <note>catalytic</note>
    </ligand>
</feature>
<feature type="binding site" evidence="1">
    <location>
        <position position="65"/>
    </location>
    <ligand>
        <name>Zn(2+)</name>
        <dbReference type="ChEBI" id="CHEBI:29105"/>
        <label>1</label>
        <note>catalytic</note>
    </ligand>
</feature>
<feature type="binding site" evidence="1">
    <location>
        <position position="67"/>
    </location>
    <ligand>
        <name>Zn(2+)</name>
        <dbReference type="ChEBI" id="CHEBI:29105"/>
        <label>2</label>
        <note>catalytic</note>
    </ligand>
</feature>
<feature type="binding site" evidence="1">
    <location>
        <position position="68"/>
    </location>
    <ligand>
        <name>Zn(2+)</name>
        <dbReference type="ChEBI" id="CHEBI:29105"/>
        <label>2</label>
        <note>catalytic</note>
    </ligand>
</feature>
<feature type="binding site" evidence="1">
    <location>
        <position position="143"/>
    </location>
    <ligand>
        <name>Zn(2+)</name>
        <dbReference type="ChEBI" id="CHEBI:29105"/>
        <label>1</label>
        <note>catalytic</note>
    </ligand>
</feature>
<feature type="binding site" evidence="1">
    <location>
        <position position="213"/>
    </location>
    <ligand>
        <name>Zn(2+)</name>
        <dbReference type="ChEBI" id="CHEBI:29105"/>
        <label>1</label>
        <note>catalytic</note>
    </ligand>
</feature>
<feature type="binding site" evidence="1">
    <location>
        <position position="213"/>
    </location>
    <ligand>
        <name>Zn(2+)</name>
        <dbReference type="ChEBI" id="CHEBI:29105"/>
        <label>2</label>
        <note>catalytic</note>
    </ligand>
</feature>
<feature type="binding site" evidence="1">
    <location>
        <position position="271"/>
    </location>
    <ligand>
        <name>Zn(2+)</name>
        <dbReference type="ChEBI" id="CHEBI:29105"/>
        <label>2</label>
        <note>catalytic</note>
    </ligand>
</feature>
<organism>
    <name type="scientific">Lactococcus lactis subsp. lactis (strain IL1403)</name>
    <name type="common">Streptococcus lactis</name>
    <dbReference type="NCBI Taxonomy" id="272623"/>
    <lineage>
        <taxon>Bacteria</taxon>
        <taxon>Bacillati</taxon>
        <taxon>Bacillota</taxon>
        <taxon>Bacilli</taxon>
        <taxon>Lactobacillales</taxon>
        <taxon>Streptococcaceae</taxon>
        <taxon>Lactococcus</taxon>
    </lineage>
</organism>
<proteinExistence type="inferred from homology"/>